<protein>
    <recommendedName>
        <fullName evidence="1">Epoxyqueuosine reductase</fullName>
        <ecNumber evidence="1">1.17.99.6</ecNumber>
    </recommendedName>
    <alternativeName>
        <fullName evidence="1">Queuosine biosynthesis protein QueG</fullName>
    </alternativeName>
</protein>
<gene>
    <name evidence="1" type="primary">queG</name>
    <name type="ordered locus">BA_0545</name>
    <name type="ordered locus">GBAA_0545</name>
    <name type="ordered locus">BAS0514</name>
</gene>
<keyword id="KW-0004">4Fe-4S</keyword>
<keyword id="KW-0963">Cytoplasm</keyword>
<keyword id="KW-0408">Iron</keyword>
<keyword id="KW-0411">Iron-sulfur</keyword>
<keyword id="KW-0479">Metal-binding</keyword>
<keyword id="KW-0560">Oxidoreductase</keyword>
<keyword id="KW-0671">Queuosine biosynthesis</keyword>
<keyword id="KW-1185">Reference proteome</keyword>
<keyword id="KW-0677">Repeat</keyword>
<keyword id="KW-0819">tRNA processing</keyword>
<reference key="1">
    <citation type="journal article" date="2003" name="Nature">
        <title>The genome sequence of Bacillus anthracis Ames and comparison to closely related bacteria.</title>
        <authorList>
            <person name="Read T.D."/>
            <person name="Peterson S.N."/>
            <person name="Tourasse N.J."/>
            <person name="Baillie L.W."/>
            <person name="Paulsen I.T."/>
            <person name="Nelson K.E."/>
            <person name="Tettelin H."/>
            <person name="Fouts D.E."/>
            <person name="Eisen J.A."/>
            <person name="Gill S.R."/>
            <person name="Holtzapple E.K."/>
            <person name="Okstad O.A."/>
            <person name="Helgason E."/>
            <person name="Rilstone J."/>
            <person name="Wu M."/>
            <person name="Kolonay J.F."/>
            <person name="Beanan M.J."/>
            <person name="Dodson R.J."/>
            <person name="Brinkac L.M."/>
            <person name="Gwinn M.L."/>
            <person name="DeBoy R.T."/>
            <person name="Madpu R."/>
            <person name="Daugherty S.C."/>
            <person name="Durkin A.S."/>
            <person name="Haft D.H."/>
            <person name="Nelson W.C."/>
            <person name="Peterson J.D."/>
            <person name="Pop M."/>
            <person name="Khouri H.M."/>
            <person name="Radune D."/>
            <person name="Benton J.L."/>
            <person name="Mahamoud Y."/>
            <person name="Jiang L."/>
            <person name="Hance I.R."/>
            <person name="Weidman J.F."/>
            <person name="Berry K.J."/>
            <person name="Plaut R.D."/>
            <person name="Wolf A.M."/>
            <person name="Watkins K.L."/>
            <person name="Nierman W.C."/>
            <person name="Hazen A."/>
            <person name="Cline R.T."/>
            <person name="Redmond C."/>
            <person name="Thwaite J.E."/>
            <person name="White O."/>
            <person name="Salzberg S.L."/>
            <person name="Thomason B."/>
            <person name="Friedlander A.M."/>
            <person name="Koehler T.M."/>
            <person name="Hanna P.C."/>
            <person name="Kolstoe A.-B."/>
            <person name="Fraser C.M."/>
        </authorList>
    </citation>
    <scope>NUCLEOTIDE SEQUENCE [LARGE SCALE GENOMIC DNA]</scope>
    <source>
        <strain>Ames / isolate Porton</strain>
    </source>
</reference>
<reference key="2">
    <citation type="journal article" date="2009" name="J. Bacteriol.">
        <title>The complete genome sequence of Bacillus anthracis Ames 'Ancestor'.</title>
        <authorList>
            <person name="Ravel J."/>
            <person name="Jiang L."/>
            <person name="Stanley S.T."/>
            <person name="Wilson M.R."/>
            <person name="Decker R.S."/>
            <person name="Read T.D."/>
            <person name="Worsham P."/>
            <person name="Keim P.S."/>
            <person name="Salzberg S.L."/>
            <person name="Fraser-Liggett C.M."/>
            <person name="Rasko D.A."/>
        </authorList>
    </citation>
    <scope>NUCLEOTIDE SEQUENCE [LARGE SCALE GENOMIC DNA]</scope>
    <source>
        <strain>Ames ancestor</strain>
    </source>
</reference>
<reference key="3">
    <citation type="submission" date="2004-01" db="EMBL/GenBank/DDBJ databases">
        <title>Complete genome sequence of Bacillus anthracis Sterne.</title>
        <authorList>
            <person name="Brettin T.S."/>
            <person name="Bruce D."/>
            <person name="Challacombe J.F."/>
            <person name="Gilna P."/>
            <person name="Han C."/>
            <person name="Hill K."/>
            <person name="Hitchcock P."/>
            <person name="Jackson P."/>
            <person name="Keim P."/>
            <person name="Longmire J."/>
            <person name="Lucas S."/>
            <person name="Okinaka R."/>
            <person name="Richardson P."/>
            <person name="Rubin E."/>
            <person name="Tice H."/>
        </authorList>
    </citation>
    <scope>NUCLEOTIDE SEQUENCE [LARGE SCALE GENOMIC DNA]</scope>
    <source>
        <strain>Sterne</strain>
    </source>
</reference>
<organism>
    <name type="scientific">Bacillus anthracis</name>
    <dbReference type="NCBI Taxonomy" id="1392"/>
    <lineage>
        <taxon>Bacteria</taxon>
        <taxon>Bacillati</taxon>
        <taxon>Bacillota</taxon>
        <taxon>Bacilli</taxon>
        <taxon>Bacillales</taxon>
        <taxon>Bacillaceae</taxon>
        <taxon>Bacillus</taxon>
        <taxon>Bacillus cereus group</taxon>
    </lineage>
</organism>
<accession>Q81YT7</accession>
<accession>E9RA89</accession>
<accession>E9RA90</accession>
<accession>Q6I3N8</accession>
<accession>Q6KXF1</accession>
<name>QUEG_BACAN</name>
<feature type="chain" id="PRO_0000416064" description="Epoxyqueuosine reductase">
    <location>
        <begin position="1"/>
        <end position="380"/>
    </location>
</feature>
<feature type="domain" description="4Fe-4S ferredoxin-type 1" evidence="1">
    <location>
        <begin position="179"/>
        <end position="208"/>
    </location>
</feature>
<feature type="domain" description="4Fe-4S ferredoxin-type 2" evidence="1">
    <location>
        <begin position="226"/>
        <end position="258"/>
    </location>
</feature>
<feature type="active site" description="Proton donor" evidence="1">
    <location>
        <position position="134"/>
    </location>
</feature>
<feature type="binding site" evidence="1">
    <location>
        <position position="188"/>
    </location>
    <ligand>
        <name>[4Fe-4S] cluster</name>
        <dbReference type="ChEBI" id="CHEBI:49883"/>
        <label>1</label>
    </ligand>
</feature>
<feature type="binding site" evidence="1">
    <location>
        <position position="191"/>
    </location>
    <ligand>
        <name>[4Fe-4S] cluster</name>
        <dbReference type="ChEBI" id="CHEBI:49883"/>
        <label>1</label>
    </ligand>
</feature>
<feature type="binding site" evidence="1">
    <location>
        <position position="194"/>
    </location>
    <ligand>
        <name>[4Fe-4S] cluster</name>
        <dbReference type="ChEBI" id="CHEBI:49883"/>
        <label>1</label>
    </ligand>
</feature>
<feature type="binding site" evidence="1">
    <location>
        <position position="198"/>
    </location>
    <ligand>
        <name>[4Fe-4S] cluster</name>
        <dbReference type="ChEBI" id="CHEBI:49883"/>
        <label>2</label>
    </ligand>
</feature>
<feature type="binding site" evidence="1">
    <location>
        <position position="214"/>
    </location>
    <ligand>
        <name>[4Fe-4S] cluster</name>
        <dbReference type="ChEBI" id="CHEBI:49883"/>
        <label>2</label>
    </ligand>
</feature>
<feature type="binding site" evidence="1">
    <location>
        <position position="240"/>
    </location>
    <ligand>
        <name>[4Fe-4S] cluster</name>
        <dbReference type="ChEBI" id="CHEBI:49883"/>
        <label>2</label>
    </ligand>
</feature>
<feature type="binding site" evidence="1">
    <location>
        <position position="243"/>
    </location>
    <ligand>
        <name>[4Fe-4S] cluster</name>
        <dbReference type="ChEBI" id="CHEBI:49883"/>
        <label>2</label>
    </ligand>
</feature>
<feature type="binding site" evidence="1">
    <location>
        <position position="247"/>
    </location>
    <ligand>
        <name>[4Fe-4S] cluster</name>
        <dbReference type="ChEBI" id="CHEBI:49883"/>
        <label>1</label>
    </ligand>
</feature>
<sequence>MDFEQLKQDVIAYSKTIGIDKIGFASASPFEELKQRLIQQQQLNYQSGFEEPDIEKRTNPQLLLSGAKSIIAIALAYPSKLKNAPLSKRGERRGIFCRASWGQDYHLVLRDRLQKLEAYLIEKLPDIEVKSMVDTGELSDRAVSERAGIGWSGKNCSIITPEFGSYVYLGEMITNVPFPPDQPIEDQCGSCTKCIDICPTGALIQGGQLDSKKCIAFLTQTKGFLPEEYRDKIGNRIYGCDTCQTVCPKNKGMDFHNHPEMEPDPELVKPLLTPLLTISNRDFKEKYGIMSGSWRGKKPLQRNAILALAHFKEASAIPDLIGVMKDDPRPVLRGTAAWALGKIGGDGVGEAIEKAMQREKDEEVLHEMNRGLELLAQKKE</sequence>
<comment type="function">
    <text evidence="1">Catalyzes the conversion of epoxyqueuosine (oQ) to queuosine (Q), which is a hypermodified base found in the wobble positions of tRNA(Asp), tRNA(Asn), tRNA(His) and tRNA(Tyr).</text>
</comment>
<comment type="catalytic activity">
    <reaction evidence="1">
        <text>epoxyqueuosine(34) in tRNA + AH2 = queuosine(34) in tRNA + A + H2O</text>
        <dbReference type="Rhea" id="RHEA:32159"/>
        <dbReference type="Rhea" id="RHEA-COMP:18571"/>
        <dbReference type="Rhea" id="RHEA-COMP:18582"/>
        <dbReference type="ChEBI" id="CHEBI:13193"/>
        <dbReference type="ChEBI" id="CHEBI:15377"/>
        <dbReference type="ChEBI" id="CHEBI:17499"/>
        <dbReference type="ChEBI" id="CHEBI:194431"/>
        <dbReference type="ChEBI" id="CHEBI:194443"/>
        <dbReference type="EC" id="1.17.99.6"/>
    </reaction>
</comment>
<comment type="cofactor">
    <cofactor evidence="1">
        <name>cob(II)alamin</name>
        <dbReference type="ChEBI" id="CHEBI:16304"/>
    </cofactor>
</comment>
<comment type="cofactor">
    <cofactor evidence="1">
        <name>[4Fe-4S] cluster</name>
        <dbReference type="ChEBI" id="CHEBI:49883"/>
    </cofactor>
    <text evidence="1">Binds 2 [4Fe-4S] clusters per monomer.</text>
</comment>
<comment type="pathway">
    <text evidence="1">tRNA modification; tRNA-queuosine biosynthesis.</text>
</comment>
<comment type="subunit">
    <text evidence="1">Monomer.</text>
</comment>
<comment type="subcellular location">
    <subcellularLocation>
        <location evidence="1">Cytoplasm</location>
    </subcellularLocation>
</comment>
<comment type="similarity">
    <text evidence="1">Belongs to the QueG family.</text>
</comment>
<proteinExistence type="inferred from homology"/>
<dbReference type="EC" id="1.17.99.6" evidence="1"/>
<dbReference type="EMBL" id="AE016879">
    <property type="protein sequence ID" value="AAP24566.1"/>
    <property type="molecule type" value="Genomic_DNA"/>
</dbReference>
<dbReference type="EMBL" id="AE017334">
    <property type="protein sequence ID" value="AAT29642.1"/>
    <property type="molecule type" value="Genomic_DNA"/>
</dbReference>
<dbReference type="EMBL" id="AE017225">
    <property type="protein sequence ID" value="AAT52843.1"/>
    <property type="molecule type" value="Genomic_DNA"/>
</dbReference>
<dbReference type="RefSeq" id="NP_843080.1">
    <property type="nucleotide sequence ID" value="NC_003997.3"/>
</dbReference>
<dbReference type="RefSeq" id="WP_000345223.1">
    <property type="nucleotide sequence ID" value="NZ_WXXJ01000020.1"/>
</dbReference>
<dbReference type="RefSeq" id="YP_026792.1">
    <property type="nucleotide sequence ID" value="NC_005945.1"/>
</dbReference>
<dbReference type="SMR" id="Q81YT7"/>
<dbReference type="STRING" id="261594.GBAA_0545"/>
<dbReference type="DNASU" id="1087855"/>
<dbReference type="GeneID" id="45020611"/>
<dbReference type="KEGG" id="ban:BA_0545"/>
<dbReference type="KEGG" id="bar:GBAA_0545"/>
<dbReference type="KEGG" id="bat:BAS0514"/>
<dbReference type="PATRIC" id="fig|198094.11.peg.543"/>
<dbReference type="eggNOG" id="COG1600">
    <property type="taxonomic scope" value="Bacteria"/>
</dbReference>
<dbReference type="HOGENOM" id="CLU_030790_2_0_9"/>
<dbReference type="OMA" id="FPAPYQL"/>
<dbReference type="OrthoDB" id="9784571at2"/>
<dbReference type="UniPathway" id="UPA00392"/>
<dbReference type="Proteomes" id="UP000000427">
    <property type="component" value="Chromosome"/>
</dbReference>
<dbReference type="Proteomes" id="UP000000594">
    <property type="component" value="Chromosome"/>
</dbReference>
<dbReference type="GO" id="GO:0005737">
    <property type="term" value="C:cytoplasm"/>
    <property type="evidence" value="ECO:0007669"/>
    <property type="project" value="UniProtKB-SubCell"/>
</dbReference>
<dbReference type="GO" id="GO:0051539">
    <property type="term" value="F:4 iron, 4 sulfur cluster binding"/>
    <property type="evidence" value="ECO:0007669"/>
    <property type="project" value="UniProtKB-KW"/>
</dbReference>
<dbReference type="GO" id="GO:0052693">
    <property type="term" value="F:epoxyqueuosine reductase activity"/>
    <property type="evidence" value="ECO:0007669"/>
    <property type="project" value="UniProtKB-UniRule"/>
</dbReference>
<dbReference type="GO" id="GO:0046872">
    <property type="term" value="F:metal ion binding"/>
    <property type="evidence" value="ECO:0007669"/>
    <property type="project" value="UniProtKB-KW"/>
</dbReference>
<dbReference type="GO" id="GO:0008616">
    <property type="term" value="P:queuosine biosynthetic process"/>
    <property type="evidence" value="ECO:0007669"/>
    <property type="project" value="UniProtKB-UniRule"/>
</dbReference>
<dbReference type="GO" id="GO:0006400">
    <property type="term" value="P:tRNA modification"/>
    <property type="evidence" value="ECO:0007669"/>
    <property type="project" value="UniProtKB-UniRule"/>
</dbReference>
<dbReference type="FunFam" id="1.25.10.10:FF:000327">
    <property type="entry name" value="Epoxyqueuosine reductase"/>
    <property type="match status" value="1"/>
</dbReference>
<dbReference type="FunFam" id="3.30.70.20:FF:000037">
    <property type="entry name" value="Epoxyqueuosine reductase"/>
    <property type="match status" value="1"/>
</dbReference>
<dbReference type="Gene3D" id="3.30.70.20">
    <property type="match status" value="1"/>
</dbReference>
<dbReference type="Gene3D" id="1.25.10.10">
    <property type="entry name" value="Leucine-rich Repeat Variant"/>
    <property type="match status" value="1"/>
</dbReference>
<dbReference type="HAMAP" id="MF_00916">
    <property type="entry name" value="QueG"/>
    <property type="match status" value="1"/>
</dbReference>
<dbReference type="InterPro" id="IPR017896">
    <property type="entry name" value="4Fe4S_Fe-S-bd"/>
</dbReference>
<dbReference type="InterPro" id="IPR017900">
    <property type="entry name" value="4Fe4S_Fe_S_CS"/>
</dbReference>
<dbReference type="InterPro" id="IPR011989">
    <property type="entry name" value="ARM-like"/>
</dbReference>
<dbReference type="InterPro" id="IPR016024">
    <property type="entry name" value="ARM-type_fold"/>
</dbReference>
<dbReference type="InterPro" id="IPR004155">
    <property type="entry name" value="PBS_lyase_HEAT"/>
</dbReference>
<dbReference type="InterPro" id="IPR004453">
    <property type="entry name" value="QueG"/>
</dbReference>
<dbReference type="InterPro" id="IPR013542">
    <property type="entry name" value="QueG_DUF1730"/>
</dbReference>
<dbReference type="NCBIfam" id="TIGR00276">
    <property type="entry name" value="tRNA epoxyqueuosine(34) reductase QueG"/>
    <property type="match status" value="1"/>
</dbReference>
<dbReference type="PANTHER" id="PTHR30002">
    <property type="entry name" value="EPOXYQUEUOSINE REDUCTASE"/>
    <property type="match status" value="1"/>
</dbReference>
<dbReference type="PANTHER" id="PTHR30002:SF4">
    <property type="entry name" value="EPOXYQUEUOSINE REDUCTASE"/>
    <property type="match status" value="1"/>
</dbReference>
<dbReference type="Pfam" id="PF13484">
    <property type="entry name" value="Fer4_16"/>
    <property type="match status" value="1"/>
</dbReference>
<dbReference type="Pfam" id="PF13646">
    <property type="entry name" value="HEAT_2"/>
    <property type="match status" value="1"/>
</dbReference>
<dbReference type="Pfam" id="PF08331">
    <property type="entry name" value="QueG_DUF1730"/>
    <property type="match status" value="1"/>
</dbReference>
<dbReference type="SMART" id="SM00567">
    <property type="entry name" value="EZ_HEAT"/>
    <property type="match status" value="2"/>
</dbReference>
<dbReference type="SUPFAM" id="SSF54862">
    <property type="entry name" value="4Fe-4S ferredoxins"/>
    <property type="match status" value="1"/>
</dbReference>
<dbReference type="SUPFAM" id="SSF48371">
    <property type="entry name" value="ARM repeat"/>
    <property type="match status" value="1"/>
</dbReference>
<dbReference type="PROSITE" id="PS00198">
    <property type="entry name" value="4FE4S_FER_1"/>
    <property type="match status" value="1"/>
</dbReference>
<dbReference type="PROSITE" id="PS51379">
    <property type="entry name" value="4FE4S_FER_2"/>
    <property type="match status" value="2"/>
</dbReference>
<evidence type="ECO:0000255" key="1">
    <source>
        <dbReference type="HAMAP-Rule" id="MF_00916"/>
    </source>
</evidence>